<organism>
    <name type="scientific">Staphylococcus epidermidis (strain ATCC 12228 / FDA PCI 1200)</name>
    <dbReference type="NCBI Taxonomy" id="176280"/>
    <lineage>
        <taxon>Bacteria</taxon>
        <taxon>Bacillati</taxon>
        <taxon>Bacillota</taxon>
        <taxon>Bacilli</taxon>
        <taxon>Bacillales</taxon>
        <taxon>Staphylococcaceae</taxon>
        <taxon>Staphylococcus</taxon>
    </lineage>
</organism>
<name>THIO_STAES</name>
<feature type="chain" id="PRO_0000120132" description="Thioredoxin">
    <location>
        <begin position="1"/>
        <end position="104"/>
    </location>
</feature>
<feature type="domain" description="Thioredoxin" evidence="2">
    <location>
        <begin position="2"/>
        <end position="104"/>
    </location>
</feature>
<feature type="disulfide bond" description="Redox-active" evidence="2">
    <location>
        <begin position="29"/>
        <end position="32"/>
    </location>
</feature>
<comment type="function">
    <text evidence="1">Component of the thioredoxin-thioredoxin reductase system. Participates in various redox reactions through the reversible oxidation of its active center dithiol to a disulfide and catalyzes dithiol-disulfide exchange reactions (By similarity).</text>
</comment>
<comment type="similarity">
    <text evidence="3">Belongs to the thioredoxin family.</text>
</comment>
<gene>
    <name type="primary">trxA</name>
    <name type="ordered locus">SE_0838</name>
</gene>
<proteinExistence type="inferred from homology"/>
<protein>
    <recommendedName>
        <fullName>Thioredoxin</fullName>
        <shortName>Trx</shortName>
    </recommendedName>
</protein>
<dbReference type="EMBL" id="AE015929">
    <property type="protein sequence ID" value="AAO04435.1"/>
    <property type="molecule type" value="Genomic_DNA"/>
</dbReference>
<dbReference type="RefSeq" id="NP_764393.1">
    <property type="nucleotide sequence ID" value="NC_004461.1"/>
</dbReference>
<dbReference type="RefSeq" id="WP_001830148.1">
    <property type="nucleotide sequence ID" value="NZ_WBME01000035.1"/>
</dbReference>
<dbReference type="SMR" id="Q8CPL5"/>
<dbReference type="GeneID" id="50019024"/>
<dbReference type="KEGG" id="sep:SE_0838"/>
<dbReference type="PATRIC" id="fig|176280.10.peg.811"/>
<dbReference type="eggNOG" id="COG3118">
    <property type="taxonomic scope" value="Bacteria"/>
</dbReference>
<dbReference type="HOGENOM" id="CLU_090389_10_2_9"/>
<dbReference type="OrthoDB" id="9790390at2"/>
<dbReference type="Proteomes" id="UP000001411">
    <property type="component" value="Chromosome"/>
</dbReference>
<dbReference type="GO" id="GO:0005829">
    <property type="term" value="C:cytosol"/>
    <property type="evidence" value="ECO:0007669"/>
    <property type="project" value="TreeGrafter"/>
</dbReference>
<dbReference type="GO" id="GO:0015035">
    <property type="term" value="F:protein-disulfide reductase activity"/>
    <property type="evidence" value="ECO:0007669"/>
    <property type="project" value="InterPro"/>
</dbReference>
<dbReference type="GO" id="GO:0045454">
    <property type="term" value="P:cell redox homeostasis"/>
    <property type="evidence" value="ECO:0007669"/>
    <property type="project" value="TreeGrafter"/>
</dbReference>
<dbReference type="CDD" id="cd02947">
    <property type="entry name" value="TRX_family"/>
    <property type="match status" value="1"/>
</dbReference>
<dbReference type="FunFam" id="3.40.30.10:FF:000001">
    <property type="entry name" value="Thioredoxin"/>
    <property type="match status" value="1"/>
</dbReference>
<dbReference type="Gene3D" id="3.40.30.10">
    <property type="entry name" value="Glutaredoxin"/>
    <property type="match status" value="1"/>
</dbReference>
<dbReference type="InterPro" id="IPR005746">
    <property type="entry name" value="Thioredoxin"/>
</dbReference>
<dbReference type="InterPro" id="IPR036249">
    <property type="entry name" value="Thioredoxin-like_sf"/>
</dbReference>
<dbReference type="InterPro" id="IPR017937">
    <property type="entry name" value="Thioredoxin_CS"/>
</dbReference>
<dbReference type="InterPro" id="IPR013766">
    <property type="entry name" value="Thioredoxin_domain"/>
</dbReference>
<dbReference type="NCBIfam" id="TIGR01068">
    <property type="entry name" value="thioredoxin"/>
    <property type="match status" value="1"/>
</dbReference>
<dbReference type="PANTHER" id="PTHR45663">
    <property type="entry name" value="GEO12009P1"/>
    <property type="match status" value="1"/>
</dbReference>
<dbReference type="PANTHER" id="PTHR45663:SF11">
    <property type="entry name" value="GEO12009P1"/>
    <property type="match status" value="1"/>
</dbReference>
<dbReference type="Pfam" id="PF00085">
    <property type="entry name" value="Thioredoxin"/>
    <property type="match status" value="1"/>
</dbReference>
<dbReference type="PIRSF" id="PIRSF000077">
    <property type="entry name" value="Thioredoxin"/>
    <property type="match status" value="1"/>
</dbReference>
<dbReference type="PRINTS" id="PR00421">
    <property type="entry name" value="THIOREDOXIN"/>
</dbReference>
<dbReference type="SUPFAM" id="SSF52833">
    <property type="entry name" value="Thioredoxin-like"/>
    <property type="match status" value="1"/>
</dbReference>
<dbReference type="PROSITE" id="PS00194">
    <property type="entry name" value="THIOREDOXIN_1"/>
    <property type="match status" value="1"/>
</dbReference>
<dbReference type="PROSITE" id="PS51352">
    <property type="entry name" value="THIOREDOXIN_2"/>
    <property type="match status" value="1"/>
</dbReference>
<sequence length="104" mass="11443">MAIVKVTDSDFDSKIESGVKLVDFWATWCGPCKMIAPVLEELAGDYDGKADILKLDVDENPSTAAKYEVMSIPTLIVFKDGEPVDKVVGFQPKENLAEVLDKHL</sequence>
<accession>Q8CPL5</accession>
<evidence type="ECO:0000250" key="1"/>
<evidence type="ECO:0000255" key="2">
    <source>
        <dbReference type="PROSITE-ProRule" id="PRU00691"/>
    </source>
</evidence>
<evidence type="ECO:0000305" key="3"/>
<reference key="1">
    <citation type="journal article" date="2003" name="Mol. Microbiol.">
        <title>Genome-based analysis of virulence genes in a non-biofilm-forming Staphylococcus epidermidis strain (ATCC 12228).</title>
        <authorList>
            <person name="Zhang Y.-Q."/>
            <person name="Ren S.-X."/>
            <person name="Li H.-L."/>
            <person name="Wang Y.-X."/>
            <person name="Fu G."/>
            <person name="Yang J."/>
            <person name="Qin Z.-Q."/>
            <person name="Miao Y.-G."/>
            <person name="Wang W.-Y."/>
            <person name="Chen R.-S."/>
            <person name="Shen Y."/>
            <person name="Chen Z."/>
            <person name="Yuan Z.-H."/>
            <person name="Zhao G.-P."/>
            <person name="Qu D."/>
            <person name="Danchin A."/>
            <person name="Wen Y.-M."/>
        </authorList>
    </citation>
    <scope>NUCLEOTIDE SEQUENCE [LARGE SCALE GENOMIC DNA]</scope>
    <source>
        <strain>ATCC 12228 / FDA PCI 1200</strain>
    </source>
</reference>
<keyword id="KW-1015">Disulfide bond</keyword>
<keyword id="KW-0249">Electron transport</keyword>
<keyword id="KW-0676">Redox-active center</keyword>
<keyword id="KW-0813">Transport</keyword>